<dbReference type="EC" id="1.17.7.4" evidence="1"/>
<dbReference type="EMBL" id="CP001600">
    <property type="protein sequence ID" value="ACR67904.1"/>
    <property type="molecule type" value="Genomic_DNA"/>
</dbReference>
<dbReference type="RefSeq" id="WP_015870097.1">
    <property type="nucleotide sequence ID" value="NZ_CP169062.1"/>
</dbReference>
<dbReference type="SMR" id="C5B7M7"/>
<dbReference type="STRING" id="67780.B6E78_14065"/>
<dbReference type="GeneID" id="69537748"/>
<dbReference type="KEGG" id="eic:NT01EI_0682"/>
<dbReference type="PATRIC" id="fig|634503.3.peg.614"/>
<dbReference type="HOGENOM" id="CLU_027486_1_0_6"/>
<dbReference type="OrthoDB" id="9804068at2"/>
<dbReference type="UniPathway" id="UPA00056">
    <property type="reaction ID" value="UER00097"/>
</dbReference>
<dbReference type="UniPathway" id="UPA00059">
    <property type="reaction ID" value="UER00105"/>
</dbReference>
<dbReference type="Proteomes" id="UP000001485">
    <property type="component" value="Chromosome"/>
</dbReference>
<dbReference type="GO" id="GO:0051539">
    <property type="term" value="F:4 iron, 4 sulfur cluster binding"/>
    <property type="evidence" value="ECO:0007669"/>
    <property type="project" value="UniProtKB-UniRule"/>
</dbReference>
<dbReference type="GO" id="GO:0051745">
    <property type="term" value="F:4-hydroxy-3-methylbut-2-enyl diphosphate reductase activity"/>
    <property type="evidence" value="ECO:0007669"/>
    <property type="project" value="UniProtKB-UniRule"/>
</dbReference>
<dbReference type="GO" id="GO:0046872">
    <property type="term" value="F:metal ion binding"/>
    <property type="evidence" value="ECO:0007669"/>
    <property type="project" value="UniProtKB-KW"/>
</dbReference>
<dbReference type="GO" id="GO:0050992">
    <property type="term" value="P:dimethylallyl diphosphate biosynthetic process"/>
    <property type="evidence" value="ECO:0007669"/>
    <property type="project" value="UniProtKB-UniRule"/>
</dbReference>
<dbReference type="GO" id="GO:0019288">
    <property type="term" value="P:isopentenyl diphosphate biosynthetic process, methylerythritol 4-phosphate pathway"/>
    <property type="evidence" value="ECO:0007669"/>
    <property type="project" value="UniProtKB-UniRule"/>
</dbReference>
<dbReference type="GO" id="GO:0016114">
    <property type="term" value="P:terpenoid biosynthetic process"/>
    <property type="evidence" value="ECO:0007669"/>
    <property type="project" value="UniProtKB-UniRule"/>
</dbReference>
<dbReference type="CDD" id="cd13944">
    <property type="entry name" value="lytB_ispH"/>
    <property type="match status" value="1"/>
</dbReference>
<dbReference type="FunFam" id="3.40.50.11270:FF:000001">
    <property type="entry name" value="4-hydroxy-3-methylbut-2-enyl diphosphate reductase"/>
    <property type="match status" value="1"/>
</dbReference>
<dbReference type="Gene3D" id="3.40.50.11270">
    <property type="match status" value="1"/>
</dbReference>
<dbReference type="Gene3D" id="3.40.1010.20">
    <property type="entry name" value="4-hydroxy-3-methylbut-2-enyl diphosphate reductase, catalytic domain"/>
    <property type="match status" value="2"/>
</dbReference>
<dbReference type="HAMAP" id="MF_00191">
    <property type="entry name" value="IspH"/>
    <property type="match status" value="1"/>
</dbReference>
<dbReference type="InterPro" id="IPR003451">
    <property type="entry name" value="LytB/IspH"/>
</dbReference>
<dbReference type="NCBIfam" id="TIGR00216">
    <property type="entry name" value="ispH_lytB"/>
    <property type="match status" value="1"/>
</dbReference>
<dbReference type="NCBIfam" id="NF002188">
    <property type="entry name" value="PRK01045.1-2"/>
    <property type="match status" value="1"/>
</dbReference>
<dbReference type="NCBIfam" id="NF002190">
    <property type="entry name" value="PRK01045.1-4"/>
    <property type="match status" value="1"/>
</dbReference>
<dbReference type="PANTHER" id="PTHR30426">
    <property type="entry name" value="4-HYDROXY-3-METHYLBUT-2-ENYL DIPHOSPHATE REDUCTASE"/>
    <property type="match status" value="1"/>
</dbReference>
<dbReference type="PANTHER" id="PTHR30426:SF0">
    <property type="entry name" value="4-HYDROXY-3-METHYLBUT-2-ENYL DIPHOSPHATE REDUCTASE"/>
    <property type="match status" value="1"/>
</dbReference>
<dbReference type="Pfam" id="PF02401">
    <property type="entry name" value="LYTB"/>
    <property type="match status" value="1"/>
</dbReference>
<keyword id="KW-0004">4Fe-4S</keyword>
<keyword id="KW-0408">Iron</keyword>
<keyword id="KW-0411">Iron-sulfur</keyword>
<keyword id="KW-0414">Isoprene biosynthesis</keyword>
<keyword id="KW-0479">Metal-binding</keyword>
<keyword id="KW-0560">Oxidoreductase</keyword>
<name>ISPH_EDWI9</name>
<gene>
    <name evidence="1" type="primary">ispH</name>
    <name type="ordered locus">NT01EI_0682</name>
</gene>
<sequence>MRILLANPRGFCAGVDRAISIVERALAIYGAPIYVRHEVVHNRFVVNDLRERGAVFIEEISEVPDGAILIFSAHGVSQAVRAEAKARHLTMLFDATCPLVTKVHMEVARASRRGTEAILIGHAGHPEVEGTMGQYSNPQGGMYLVESPQDVWQLQVKDEQNLCFMTQTTLSVDDTSEVIDALRARFPAIVGPRKDDICYATTNRQEAVRSLAVQADVVLVVGSKNSSNSNRLAELARRAGRAAYLIDSASDIDDAWLSGVGCVGVTAGASAPDVLVREVIDRLQALGGAAAQEIQGREENIVFEVPRELRIEVQQAD</sequence>
<feature type="chain" id="PRO_1000204002" description="4-hydroxy-3-methylbut-2-enyl diphosphate reductase">
    <location>
        <begin position="1"/>
        <end position="317"/>
    </location>
</feature>
<feature type="active site" description="Proton donor" evidence="1">
    <location>
        <position position="127"/>
    </location>
</feature>
<feature type="binding site" evidence="1">
    <location>
        <position position="12"/>
    </location>
    <ligand>
        <name>[4Fe-4S] cluster</name>
        <dbReference type="ChEBI" id="CHEBI:49883"/>
    </ligand>
</feature>
<feature type="binding site" evidence="1">
    <location>
        <position position="41"/>
    </location>
    <ligand>
        <name>(2E)-4-hydroxy-3-methylbut-2-enyl diphosphate</name>
        <dbReference type="ChEBI" id="CHEBI:128753"/>
    </ligand>
</feature>
<feature type="binding site" evidence="1">
    <location>
        <position position="41"/>
    </location>
    <ligand>
        <name>dimethylallyl diphosphate</name>
        <dbReference type="ChEBI" id="CHEBI:57623"/>
    </ligand>
</feature>
<feature type="binding site" evidence="1">
    <location>
        <position position="41"/>
    </location>
    <ligand>
        <name>isopentenyl diphosphate</name>
        <dbReference type="ChEBI" id="CHEBI:128769"/>
    </ligand>
</feature>
<feature type="binding site" evidence="1">
    <location>
        <position position="74"/>
    </location>
    <ligand>
        <name>(2E)-4-hydroxy-3-methylbut-2-enyl diphosphate</name>
        <dbReference type="ChEBI" id="CHEBI:128753"/>
    </ligand>
</feature>
<feature type="binding site" evidence="1">
    <location>
        <position position="74"/>
    </location>
    <ligand>
        <name>dimethylallyl diphosphate</name>
        <dbReference type="ChEBI" id="CHEBI:57623"/>
    </ligand>
</feature>
<feature type="binding site" evidence="1">
    <location>
        <position position="74"/>
    </location>
    <ligand>
        <name>isopentenyl diphosphate</name>
        <dbReference type="ChEBI" id="CHEBI:128769"/>
    </ligand>
</feature>
<feature type="binding site" evidence="1">
    <location>
        <position position="97"/>
    </location>
    <ligand>
        <name>[4Fe-4S] cluster</name>
        <dbReference type="ChEBI" id="CHEBI:49883"/>
    </ligand>
</feature>
<feature type="binding site" evidence="1">
    <location>
        <position position="125"/>
    </location>
    <ligand>
        <name>(2E)-4-hydroxy-3-methylbut-2-enyl diphosphate</name>
        <dbReference type="ChEBI" id="CHEBI:128753"/>
    </ligand>
</feature>
<feature type="binding site" evidence="1">
    <location>
        <position position="125"/>
    </location>
    <ligand>
        <name>dimethylallyl diphosphate</name>
        <dbReference type="ChEBI" id="CHEBI:57623"/>
    </ligand>
</feature>
<feature type="binding site" evidence="1">
    <location>
        <position position="125"/>
    </location>
    <ligand>
        <name>isopentenyl diphosphate</name>
        <dbReference type="ChEBI" id="CHEBI:128769"/>
    </ligand>
</feature>
<feature type="binding site" evidence="1">
    <location>
        <position position="168"/>
    </location>
    <ligand>
        <name>(2E)-4-hydroxy-3-methylbut-2-enyl diphosphate</name>
        <dbReference type="ChEBI" id="CHEBI:128753"/>
    </ligand>
</feature>
<feature type="binding site" evidence="1">
    <location>
        <position position="198"/>
    </location>
    <ligand>
        <name>[4Fe-4S] cluster</name>
        <dbReference type="ChEBI" id="CHEBI:49883"/>
    </ligand>
</feature>
<feature type="binding site" evidence="1">
    <location>
        <position position="226"/>
    </location>
    <ligand>
        <name>(2E)-4-hydroxy-3-methylbut-2-enyl diphosphate</name>
        <dbReference type="ChEBI" id="CHEBI:128753"/>
    </ligand>
</feature>
<feature type="binding site" evidence="1">
    <location>
        <position position="226"/>
    </location>
    <ligand>
        <name>dimethylallyl diphosphate</name>
        <dbReference type="ChEBI" id="CHEBI:57623"/>
    </ligand>
</feature>
<feature type="binding site" evidence="1">
    <location>
        <position position="226"/>
    </location>
    <ligand>
        <name>isopentenyl diphosphate</name>
        <dbReference type="ChEBI" id="CHEBI:128769"/>
    </ligand>
</feature>
<feature type="binding site" evidence="1">
    <location>
        <position position="227"/>
    </location>
    <ligand>
        <name>(2E)-4-hydroxy-3-methylbut-2-enyl diphosphate</name>
        <dbReference type="ChEBI" id="CHEBI:128753"/>
    </ligand>
</feature>
<feature type="binding site" evidence="1">
    <location>
        <position position="227"/>
    </location>
    <ligand>
        <name>dimethylallyl diphosphate</name>
        <dbReference type="ChEBI" id="CHEBI:57623"/>
    </ligand>
</feature>
<feature type="binding site" evidence="1">
    <location>
        <position position="227"/>
    </location>
    <ligand>
        <name>isopentenyl diphosphate</name>
        <dbReference type="ChEBI" id="CHEBI:128769"/>
    </ligand>
</feature>
<feature type="binding site" evidence="1">
    <location>
        <position position="228"/>
    </location>
    <ligand>
        <name>(2E)-4-hydroxy-3-methylbut-2-enyl diphosphate</name>
        <dbReference type="ChEBI" id="CHEBI:128753"/>
    </ligand>
</feature>
<feature type="binding site" evidence="1">
    <location>
        <position position="228"/>
    </location>
    <ligand>
        <name>dimethylallyl diphosphate</name>
        <dbReference type="ChEBI" id="CHEBI:57623"/>
    </ligand>
</feature>
<feature type="binding site" evidence="1">
    <location>
        <position position="228"/>
    </location>
    <ligand>
        <name>isopentenyl diphosphate</name>
        <dbReference type="ChEBI" id="CHEBI:128769"/>
    </ligand>
</feature>
<feature type="binding site" evidence="1">
    <location>
        <position position="270"/>
    </location>
    <ligand>
        <name>(2E)-4-hydroxy-3-methylbut-2-enyl diphosphate</name>
        <dbReference type="ChEBI" id="CHEBI:128753"/>
    </ligand>
</feature>
<feature type="binding site" evidence="1">
    <location>
        <position position="270"/>
    </location>
    <ligand>
        <name>dimethylallyl diphosphate</name>
        <dbReference type="ChEBI" id="CHEBI:57623"/>
    </ligand>
</feature>
<feature type="binding site" evidence="1">
    <location>
        <position position="270"/>
    </location>
    <ligand>
        <name>isopentenyl diphosphate</name>
        <dbReference type="ChEBI" id="CHEBI:128769"/>
    </ligand>
</feature>
<reference key="1">
    <citation type="submission" date="2009-03" db="EMBL/GenBank/DDBJ databases">
        <title>Complete genome sequence of Edwardsiella ictaluri 93-146.</title>
        <authorList>
            <person name="Williams M.L."/>
            <person name="Gillaspy A.F."/>
            <person name="Dyer D.W."/>
            <person name="Thune R.L."/>
            <person name="Waldbieser G.C."/>
            <person name="Schuster S.C."/>
            <person name="Gipson J."/>
            <person name="Zaitshik J."/>
            <person name="Landry C."/>
            <person name="Lawrence M.L."/>
        </authorList>
    </citation>
    <scope>NUCLEOTIDE SEQUENCE [LARGE SCALE GENOMIC DNA]</scope>
    <source>
        <strain>93-146</strain>
    </source>
</reference>
<proteinExistence type="inferred from homology"/>
<protein>
    <recommendedName>
        <fullName evidence="1">4-hydroxy-3-methylbut-2-enyl diphosphate reductase</fullName>
        <shortName evidence="1">HMBPP reductase</shortName>
        <ecNumber evidence="1">1.17.7.4</ecNumber>
    </recommendedName>
</protein>
<comment type="function">
    <text evidence="1">Catalyzes the conversion of 1-hydroxy-2-methyl-2-(E)-butenyl 4-diphosphate (HMBPP) into a mixture of isopentenyl diphosphate (IPP) and dimethylallyl diphosphate (DMAPP). Acts in the terminal step of the DOXP/MEP pathway for isoprenoid precursor biosynthesis.</text>
</comment>
<comment type="catalytic activity">
    <reaction evidence="1">
        <text>isopentenyl diphosphate + 2 oxidized [2Fe-2S]-[ferredoxin] + H2O = (2E)-4-hydroxy-3-methylbut-2-enyl diphosphate + 2 reduced [2Fe-2S]-[ferredoxin] + 2 H(+)</text>
        <dbReference type="Rhea" id="RHEA:24488"/>
        <dbReference type="Rhea" id="RHEA-COMP:10000"/>
        <dbReference type="Rhea" id="RHEA-COMP:10001"/>
        <dbReference type="ChEBI" id="CHEBI:15377"/>
        <dbReference type="ChEBI" id="CHEBI:15378"/>
        <dbReference type="ChEBI" id="CHEBI:33737"/>
        <dbReference type="ChEBI" id="CHEBI:33738"/>
        <dbReference type="ChEBI" id="CHEBI:128753"/>
        <dbReference type="ChEBI" id="CHEBI:128769"/>
        <dbReference type="EC" id="1.17.7.4"/>
    </reaction>
</comment>
<comment type="catalytic activity">
    <reaction evidence="1">
        <text>dimethylallyl diphosphate + 2 oxidized [2Fe-2S]-[ferredoxin] + H2O = (2E)-4-hydroxy-3-methylbut-2-enyl diphosphate + 2 reduced [2Fe-2S]-[ferredoxin] + 2 H(+)</text>
        <dbReference type="Rhea" id="RHEA:24825"/>
        <dbReference type="Rhea" id="RHEA-COMP:10000"/>
        <dbReference type="Rhea" id="RHEA-COMP:10001"/>
        <dbReference type="ChEBI" id="CHEBI:15377"/>
        <dbReference type="ChEBI" id="CHEBI:15378"/>
        <dbReference type="ChEBI" id="CHEBI:33737"/>
        <dbReference type="ChEBI" id="CHEBI:33738"/>
        <dbReference type="ChEBI" id="CHEBI:57623"/>
        <dbReference type="ChEBI" id="CHEBI:128753"/>
        <dbReference type="EC" id="1.17.7.4"/>
    </reaction>
</comment>
<comment type="cofactor">
    <cofactor evidence="1">
        <name>[4Fe-4S] cluster</name>
        <dbReference type="ChEBI" id="CHEBI:49883"/>
    </cofactor>
    <text evidence="1">Binds 1 [4Fe-4S] cluster per subunit.</text>
</comment>
<comment type="pathway">
    <text evidence="1">Isoprenoid biosynthesis; dimethylallyl diphosphate biosynthesis; dimethylallyl diphosphate from (2E)-4-hydroxy-3-methylbutenyl diphosphate: step 1/1.</text>
</comment>
<comment type="pathway">
    <text evidence="1">Isoprenoid biosynthesis; isopentenyl diphosphate biosynthesis via DXP pathway; isopentenyl diphosphate from 1-deoxy-D-xylulose 5-phosphate: step 6/6.</text>
</comment>
<comment type="subunit">
    <text evidence="1">Homodimer.</text>
</comment>
<comment type="similarity">
    <text evidence="1">Belongs to the IspH family.</text>
</comment>
<organism>
    <name type="scientific">Edwardsiella ictaluri (strain 93-146)</name>
    <dbReference type="NCBI Taxonomy" id="634503"/>
    <lineage>
        <taxon>Bacteria</taxon>
        <taxon>Pseudomonadati</taxon>
        <taxon>Pseudomonadota</taxon>
        <taxon>Gammaproteobacteria</taxon>
        <taxon>Enterobacterales</taxon>
        <taxon>Hafniaceae</taxon>
        <taxon>Edwardsiella</taxon>
    </lineage>
</organism>
<accession>C5B7M7</accession>
<evidence type="ECO:0000255" key="1">
    <source>
        <dbReference type="HAMAP-Rule" id="MF_00191"/>
    </source>
</evidence>